<name>DRL5_ARATH</name>
<evidence type="ECO:0000250" key="1"/>
<evidence type="ECO:0000255" key="2"/>
<evidence type="ECO:0000305" key="3"/>
<dbReference type="EMBL" id="AC024261">
    <property type="protein sequence ID" value="AAG52625.1"/>
    <property type="status" value="ALT_SEQ"/>
    <property type="molecule type" value="Genomic_DNA"/>
</dbReference>
<dbReference type="EMBL" id="CP002684">
    <property type="protein sequence ID" value="AEE32672.2"/>
    <property type="molecule type" value="Genomic_DNA"/>
</dbReference>
<dbReference type="PIR" id="B96553">
    <property type="entry name" value="B96553"/>
</dbReference>
<dbReference type="RefSeq" id="NP_175559.2">
    <property type="nucleotide sequence ID" value="NM_104026.2"/>
</dbReference>
<dbReference type="SMR" id="Q9C8K0"/>
<dbReference type="STRING" id="3702.Q9C8K0"/>
<dbReference type="PaxDb" id="3702-AT1G51480.1"/>
<dbReference type="EnsemblPlants" id="AT1G51480.1">
    <property type="protein sequence ID" value="AT1G51480.1"/>
    <property type="gene ID" value="AT1G51480"/>
</dbReference>
<dbReference type="GeneID" id="841573"/>
<dbReference type="Gramene" id="AT1G51480.1">
    <property type="protein sequence ID" value="AT1G51480.1"/>
    <property type="gene ID" value="AT1G51480"/>
</dbReference>
<dbReference type="KEGG" id="ath:AT1G51480"/>
<dbReference type="Araport" id="AT1G51480"/>
<dbReference type="TAIR" id="AT1G51480">
    <property type="gene designation" value="RSG1"/>
</dbReference>
<dbReference type="eggNOG" id="KOG4658">
    <property type="taxonomic scope" value="Eukaryota"/>
</dbReference>
<dbReference type="HOGENOM" id="CLU_000427_4_0_1"/>
<dbReference type="InParanoid" id="Q9C8K0"/>
<dbReference type="OMA" id="PMEIHPS"/>
<dbReference type="PhylomeDB" id="Q9C8K0"/>
<dbReference type="PRO" id="PR:Q9C8K0"/>
<dbReference type="Proteomes" id="UP000006548">
    <property type="component" value="Chromosome 1"/>
</dbReference>
<dbReference type="ExpressionAtlas" id="Q9C8K0">
    <property type="expression patterns" value="baseline and differential"/>
</dbReference>
<dbReference type="GO" id="GO:0043531">
    <property type="term" value="F:ADP binding"/>
    <property type="evidence" value="ECO:0007669"/>
    <property type="project" value="InterPro"/>
</dbReference>
<dbReference type="GO" id="GO:0005524">
    <property type="term" value="F:ATP binding"/>
    <property type="evidence" value="ECO:0007669"/>
    <property type="project" value="UniProtKB-KW"/>
</dbReference>
<dbReference type="GO" id="GO:0006952">
    <property type="term" value="P:defense response"/>
    <property type="evidence" value="ECO:0007669"/>
    <property type="project" value="UniProtKB-KW"/>
</dbReference>
<dbReference type="FunFam" id="3.80.10.10:FF:000834">
    <property type="entry name" value="Probable disease resistance protein At1g15890"/>
    <property type="match status" value="1"/>
</dbReference>
<dbReference type="FunFam" id="3.40.50.300:FF:001091">
    <property type="entry name" value="Probable disease resistance protein At1g61300"/>
    <property type="match status" value="1"/>
</dbReference>
<dbReference type="FunFam" id="1.10.10.10:FF:000322">
    <property type="entry name" value="Probable disease resistance protein At1g63360"/>
    <property type="match status" value="1"/>
</dbReference>
<dbReference type="FunFam" id="1.10.8.430:FF:000003">
    <property type="entry name" value="Probable disease resistance protein At5g66910"/>
    <property type="match status" value="1"/>
</dbReference>
<dbReference type="Gene3D" id="1.10.8.430">
    <property type="entry name" value="Helical domain of apoptotic protease-activating factors"/>
    <property type="match status" value="1"/>
</dbReference>
<dbReference type="Gene3D" id="3.40.50.300">
    <property type="entry name" value="P-loop containing nucleotide triphosphate hydrolases"/>
    <property type="match status" value="1"/>
</dbReference>
<dbReference type="Gene3D" id="3.80.10.10">
    <property type="entry name" value="Ribonuclease Inhibitor"/>
    <property type="match status" value="1"/>
</dbReference>
<dbReference type="Gene3D" id="1.10.10.10">
    <property type="entry name" value="Winged helix-like DNA-binding domain superfamily/Winged helix DNA-binding domain"/>
    <property type="match status" value="1"/>
</dbReference>
<dbReference type="InterPro" id="IPR042197">
    <property type="entry name" value="Apaf_helical"/>
</dbReference>
<dbReference type="InterPro" id="IPR032675">
    <property type="entry name" value="LRR_dom_sf"/>
</dbReference>
<dbReference type="InterPro" id="IPR055414">
    <property type="entry name" value="LRR_R13L4/SHOC2-like"/>
</dbReference>
<dbReference type="InterPro" id="IPR002182">
    <property type="entry name" value="NB-ARC"/>
</dbReference>
<dbReference type="InterPro" id="IPR027417">
    <property type="entry name" value="P-loop_NTPase"/>
</dbReference>
<dbReference type="InterPro" id="IPR050905">
    <property type="entry name" value="Plant_NBS-LRR"/>
</dbReference>
<dbReference type="InterPro" id="IPR036388">
    <property type="entry name" value="WH-like_DNA-bd_sf"/>
</dbReference>
<dbReference type="PANTHER" id="PTHR33463:SF220">
    <property type="entry name" value="NB-ARC DOMAIN-CONTAINING PROTEIN"/>
    <property type="match status" value="1"/>
</dbReference>
<dbReference type="PANTHER" id="PTHR33463">
    <property type="entry name" value="NB-ARC DOMAIN-CONTAINING PROTEIN-RELATED"/>
    <property type="match status" value="1"/>
</dbReference>
<dbReference type="Pfam" id="PF23598">
    <property type="entry name" value="LRR_14"/>
    <property type="match status" value="1"/>
</dbReference>
<dbReference type="Pfam" id="PF00931">
    <property type="entry name" value="NB-ARC"/>
    <property type="match status" value="1"/>
</dbReference>
<dbReference type="Pfam" id="PF23559">
    <property type="entry name" value="WH_DRP"/>
    <property type="match status" value="1"/>
</dbReference>
<dbReference type="PRINTS" id="PR00364">
    <property type="entry name" value="DISEASERSIST"/>
</dbReference>
<dbReference type="SUPFAM" id="SSF52058">
    <property type="entry name" value="L domain-like"/>
    <property type="match status" value="1"/>
</dbReference>
<dbReference type="SUPFAM" id="SSF52540">
    <property type="entry name" value="P-loop containing nucleoside triphosphate hydrolases"/>
    <property type="match status" value="1"/>
</dbReference>
<proteinExistence type="inferred from homology"/>
<comment type="function">
    <text evidence="1">Probable disease resistance protein.</text>
</comment>
<comment type="domain">
    <text evidence="1">The LRR repeats probably act as specificity determinant of pathogen recognition.</text>
</comment>
<comment type="similarity">
    <text evidence="3">Belongs to the disease resistance NB-LRR family.</text>
</comment>
<comment type="sequence caution" evidence="3">
    <conflict type="erroneous gene model prediction">
        <sequence resource="EMBL-CDS" id="AAG52625"/>
    </conflict>
</comment>
<comment type="online information" name="NIB-LRRS">
    <link uri="http://niblrrs.ucdavis.edu"/>
    <text>Functional and comparative genomics of disease resistance gene homologs</text>
</comment>
<gene>
    <name type="ordered locus">At1g51480</name>
    <name type="ORF">F5D21.7</name>
</gene>
<reference key="1">
    <citation type="journal article" date="2000" name="Nature">
        <title>Sequence and analysis of chromosome 1 of the plant Arabidopsis thaliana.</title>
        <authorList>
            <person name="Theologis A."/>
            <person name="Ecker J.R."/>
            <person name="Palm C.J."/>
            <person name="Federspiel N.A."/>
            <person name="Kaul S."/>
            <person name="White O."/>
            <person name="Alonso J."/>
            <person name="Altafi H."/>
            <person name="Araujo R."/>
            <person name="Bowman C.L."/>
            <person name="Brooks S.Y."/>
            <person name="Buehler E."/>
            <person name="Chan A."/>
            <person name="Chao Q."/>
            <person name="Chen H."/>
            <person name="Cheuk R.F."/>
            <person name="Chin C.W."/>
            <person name="Chung M.K."/>
            <person name="Conn L."/>
            <person name="Conway A.B."/>
            <person name="Conway A.R."/>
            <person name="Creasy T.H."/>
            <person name="Dewar K."/>
            <person name="Dunn P."/>
            <person name="Etgu P."/>
            <person name="Feldblyum T.V."/>
            <person name="Feng J.-D."/>
            <person name="Fong B."/>
            <person name="Fujii C.Y."/>
            <person name="Gill J.E."/>
            <person name="Goldsmith A.D."/>
            <person name="Haas B."/>
            <person name="Hansen N.F."/>
            <person name="Hughes B."/>
            <person name="Huizar L."/>
            <person name="Hunter J.L."/>
            <person name="Jenkins J."/>
            <person name="Johnson-Hopson C."/>
            <person name="Khan S."/>
            <person name="Khaykin E."/>
            <person name="Kim C.J."/>
            <person name="Koo H.L."/>
            <person name="Kremenetskaia I."/>
            <person name="Kurtz D.B."/>
            <person name="Kwan A."/>
            <person name="Lam B."/>
            <person name="Langin-Hooper S."/>
            <person name="Lee A."/>
            <person name="Lee J.M."/>
            <person name="Lenz C.A."/>
            <person name="Li J.H."/>
            <person name="Li Y.-P."/>
            <person name="Lin X."/>
            <person name="Liu S.X."/>
            <person name="Liu Z.A."/>
            <person name="Luros J.S."/>
            <person name="Maiti R."/>
            <person name="Marziali A."/>
            <person name="Militscher J."/>
            <person name="Miranda M."/>
            <person name="Nguyen M."/>
            <person name="Nierman W.C."/>
            <person name="Osborne B.I."/>
            <person name="Pai G."/>
            <person name="Peterson J."/>
            <person name="Pham P.K."/>
            <person name="Rizzo M."/>
            <person name="Rooney T."/>
            <person name="Rowley D."/>
            <person name="Sakano H."/>
            <person name="Salzberg S.L."/>
            <person name="Schwartz J.R."/>
            <person name="Shinn P."/>
            <person name="Southwick A.M."/>
            <person name="Sun H."/>
            <person name="Tallon L.J."/>
            <person name="Tambunga G."/>
            <person name="Toriumi M.J."/>
            <person name="Town C.D."/>
            <person name="Utterback T."/>
            <person name="Van Aken S."/>
            <person name="Vaysberg M."/>
            <person name="Vysotskaia V.S."/>
            <person name="Walker M."/>
            <person name="Wu D."/>
            <person name="Yu G."/>
            <person name="Fraser C.M."/>
            <person name="Venter J.C."/>
            <person name="Davis R.W."/>
        </authorList>
    </citation>
    <scope>NUCLEOTIDE SEQUENCE [LARGE SCALE GENOMIC DNA]</scope>
    <source>
        <strain>cv. Columbia</strain>
    </source>
</reference>
<reference key="2">
    <citation type="journal article" date="2017" name="Plant J.">
        <title>Araport11: a complete reannotation of the Arabidopsis thaliana reference genome.</title>
        <authorList>
            <person name="Cheng C.Y."/>
            <person name="Krishnakumar V."/>
            <person name="Chan A.P."/>
            <person name="Thibaud-Nissen F."/>
            <person name="Schobel S."/>
            <person name="Town C.D."/>
        </authorList>
    </citation>
    <scope>GENOME REANNOTATION</scope>
    <source>
        <strain>cv. Columbia</strain>
    </source>
</reference>
<sequence>MADWLLLIPWNKIFTAACGCFFSDRNYIHKMEANLDDLHTTMEELKNGRDDLLRRVSIEEDKGLQQLAQVKGWISRVEIVESRFKDLLEDKSTETGRLCLFGFCSENCISSYNYGEKVMKNLEEVKELLSKKHFEVVAHKIPVPKVEEKNIHTTVGLYAMVEMAWKSLMNDEIRTLCLHGMGGVGKTTLLACINNKFVELESEFDVVIWVVVSKDFQLEGIQDQILGRLRLDKEWERETENKKASLINNNLKRKKFVLLLDDLWSEVDLNKIGVPPPTRENGAKIVFTKRSKEVSKYMKADMQIKVSCLSPDEAWELFRITVDDVILSSHEDIPALARIVAAKCHGLPLALIVIGEAMACKETIQEWHHAINVLNSPAGHKFPGMEERILLVLKFSYDSLKNGEIKLCFLYCSLFPEDFEIEKEKLIEYWICEGYINPNRYEDGGTNQGYDIIGLLVRAHLLIECELTTKVKMHYVIREMALWINSDFGKQQETICVKSGAHVRMIPNDINWEIVRQVSLISTQIEKISCSSKCSNLSTLLLPYNKLVNISVGFFLFMPKLVVLDLSTNMSLIELPEEISNLCSLQYLNLSSTGIKSLPGGMKKLRKLIYLNLEFSYKLESLVGISATLPNLQVLKLFYSNVCVDDILMEELQHMDHLKILTVTIDDAMILERIQGIDRLASSIRGLCLTNMSAPRVVLSTTALGGLQQLAILSCNISEIKMDWKSKERREVSPMEIHPSTSTSSPGFKQLSSVNIMKLVGPRDLSWLLFAQNLKSLHVGFSPEIEEIINKEKGSSITKEIAFGKLESLVIYKLPELKEICWNYRTLPNSRYFDVKDCPKLPEDIANFPMHAEE</sequence>
<accession>Q9C8K0</accession>
<accession>F4I9J4</accession>
<feature type="chain" id="PRO_0000212737" description="Probable disease resistance protein At1g51480">
    <location>
        <begin position="1"/>
        <end position="854"/>
    </location>
</feature>
<feature type="domain" description="NB-ARC">
    <location>
        <begin position="138"/>
        <end position="441"/>
    </location>
</feature>
<feature type="repeat" description="LRR 1">
    <location>
        <begin position="514"/>
        <end position="535"/>
    </location>
</feature>
<feature type="repeat" description="LRR 2">
    <location>
        <begin position="536"/>
        <end position="557"/>
    </location>
</feature>
<feature type="repeat" description="LRR 3">
    <location>
        <begin position="560"/>
        <end position="582"/>
    </location>
</feature>
<feature type="repeat" description="LRR 4">
    <location>
        <begin position="584"/>
        <end position="605"/>
    </location>
</feature>
<feature type="repeat" description="LRR 5">
    <location>
        <begin position="607"/>
        <end position="629"/>
    </location>
</feature>
<feature type="repeat" description="LRR 6">
    <location>
        <begin position="631"/>
        <end position="652"/>
    </location>
</feature>
<feature type="coiled-coil region" evidence="2">
    <location>
        <begin position="25"/>
        <end position="62"/>
    </location>
</feature>
<feature type="binding site" evidence="2">
    <location>
        <begin position="180"/>
        <end position="187"/>
    </location>
    <ligand>
        <name>ATP</name>
        <dbReference type="ChEBI" id="CHEBI:30616"/>
    </ligand>
</feature>
<organism>
    <name type="scientific">Arabidopsis thaliana</name>
    <name type="common">Mouse-ear cress</name>
    <dbReference type="NCBI Taxonomy" id="3702"/>
    <lineage>
        <taxon>Eukaryota</taxon>
        <taxon>Viridiplantae</taxon>
        <taxon>Streptophyta</taxon>
        <taxon>Embryophyta</taxon>
        <taxon>Tracheophyta</taxon>
        <taxon>Spermatophyta</taxon>
        <taxon>Magnoliopsida</taxon>
        <taxon>eudicotyledons</taxon>
        <taxon>Gunneridae</taxon>
        <taxon>Pentapetalae</taxon>
        <taxon>rosids</taxon>
        <taxon>malvids</taxon>
        <taxon>Brassicales</taxon>
        <taxon>Brassicaceae</taxon>
        <taxon>Camelineae</taxon>
        <taxon>Arabidopsis</taxon>
    </lineage>
</organism>
<keyword id="KW-0067">ATP-binding</keyword>
<keyword id="KW-0175">Coiled coil</keyword>
<keyword id="KW-0433">Leucine-rich repeat</keyword>
<keyword id="KW-0547">Nucleotide-binding</keyword>
<keyword id="KW-0611">Plant defense</keyword>
<keyword id="KW-1185">Reference proteome</keyword>
<keyword id="KW-0677">Repeat</keyword>
<protein>
    <recommendedName>
        <fullName>Probable disease resistance protein At1g51480</fullName>
    </recommendedName>
</protein>